<dbReference type="EMBL" id="AY835431">
    <property type="protein sequence ID" value="AAV80702.1"/>
    <property type="molecule type" value="Genomic_DNA"/>
</dbReference>
<dbReference type="RefSeq" id="YP_636224.1">
    <property type="nucleotide sequence ID" value="NC_008114.1"/>
</dbReference>
<dbReference type="SMR" id="Q3ZJ43"/>
<dbReference type="GeneID" id="4108735"/>
<dbReference type="GO" id="GO:0009535">
    <property type="term" value="C:chloroplast thylakoid membrane"/>
    <property type="evidence" value="ECO:0007669"/>
    <property type="project" value="UniProtKB-SubCell"/>
</dbReference>
<dbReference type="GO" id="GO:0009523">
    <property type="term" value="C:photosystem II"/>
    <property type="evidence" value="ECO:0007669"/>
    <property type="project" value="UniProtKB-KW"/>
</dbReference>
<dbReference type="GO" id="GO:0016168">
    <property type="term" value="F:chlorophyll binding"/>
    <property type="evidence" value="ECO:0007669"/>
    <property type="project" value="UniProtKB-UniRule"/>
</dbReference>
<dbReference type="GO" id="GO:0045156">
    <property type="term" value="F:electron transporter, transferring electrons within the cyclic electron transport pathway of photosynthesis activity"/>
    <property type="evidence" value="ECO:0007669"/>
    <property type="project" value="InterPro"/>
</dbReference>
<dbReference type="GO" id="GO:0046872">
    <property type="term" value="F:metal ion binding"/>
    <property type="evidence" value="ECO:0007669"/>
    <property type="project" value="UniProtKB-KW"/>
</dbReference>
<dbReference type="GO" id="GO:0009772">
    <property type="term" value="P:photosynthetic electron transport in photosystem II"/>
    <property type="evidence" value="ECO:0007669"/>
    <property type="project" value="InterPro"/>
</dbReference>
<dbReference type="FunFam" id="1.10.10.670:FF:000001">
    <property type="entry name" value="Photosystem II CP43 reaction center protein"/>
    <property type="match status" value="1"/>
</dbReference>
<dbReference type="Gene3D" id="1.10.10.670">
    <property type="entry name" value="photosystem ii from thermosynechococcus elongatus"/>
    <property type="match status" value="1"/>
</dbReference>
<dbReference type="HAMAP" id="MF_01496">
    <property type="entry name" value="PSII_PsbC_CP43"/>
    <property type="match status" value="1"/>
</dbReference>
<dbReference type="InterPro" id="IPR000932">
    <property type="entry name" value="PS_antenna-like"/>
</dbReference>
<dbReference type="InterPro" id="IPR036001">
    <property type="entry name" value="PS_II_antenna-like_sf"/>
</dbReference>
<dbReference type="InterPro" id="IPR005869">
    <property type="entry name" value="PSII_PsbC"/>
</dbReference>
<dbReference type="InterPro" id="IPR044900">
    <property type="entry name" value="PSII_PsbC_sf"/>
</dbReference>
<dbReference type="NCBIfam" id="TIGR01153">
    <property type="entry name" value="psbC"/>
    <property type="match status" value="1"/>
</dbReference>
<dbReference type="Pfam" id="PF00421">
    <property type="entry name" value="PSII"/>
    <property type="match status" value="1"/>
</dbReference>
<dbReference type="SUPFAM" id="SSF161077">
    <property type="entry name" value="Photosystem II antenna protein-like"/>
    <property type="match status" value="1"/>
</dbReference>
<sequence>METLFNGTLSVGGRDQESTGFAWWSGNARLINLSGKLLGAHVAHAGLIVFWAGAMNLFEVAHFIPEKPMYEQGLILLPHLASLGYGVGPGGEVVDTFPYFVSGVLHLISSAVLGFGGVYHSLIGPETLEESFPFFGYVWKDKNKMSTILGIHLVILGFGAWLLVWKAMYFGGLFDPWSVGGGDVRVITNPTISPGIIFGYLLKSPFGGDGWIVSVDNMEDVVGGHIWIGTLEILGGIWHILTKPWAWARRAFVWSGEAYLSYSLGAVSLMAFIACCMSWFNNTVYPSEFYGPTGPEASQSQAFTFLVRDQRLGANVASAQGPTGLGKYLMRSPTGEIIFGGETMRFWDFRGPWLEPLRGPNGLDLNKLKNDIQPWQERRAAEYMTHAPLGSLNSVGGVATEINATNFVSPRSWLACSHFVLGFFFFVGHLWHAGRARAAAAGFEKGIDRDNEPVLSMKPLD</sequence>
<comment type="function">
    <text evidence="1">One of the components of the core complex of photosystem II (PSII). It binds chlorophyll and helps catalyze the primary light-induced photochemical processes of PSII. PSII is a light-driven water:plastoquinone oxidoreductase, using light energy to abstract electrons from H(2)O, generating O(2) and a proton gradient subsequently used for ATP formation.</text>
</comment>
<comment type="cofactor">
    <text evidence="1">Binds multiple chlorophylls and provides some of the ligands for the Ca-4Mn-5O cluster of the oxygen-evolving complex. It may also provide a ligand for a Cl- that is required for oxygen evolution. PSII binds additional chlorophylls, carotenoids and specific lipids.</text>
</comment>
<comment type="subunit">
    <text evidence="1">PSII is composed of 1 copy each of membrane proteins PsbA, PsbB, PsbC, PsbD, PsbE, PsbF, PsbH, PsbI, PsbJ, PsbK, PsbL, PsbM, PsbT, PsbX, PsbY, PsbZ, Psb30/Ycf12, at least 3 peripheral proteins of the oxygen-evolving complex and a large number of cofactors. It forms dimeric complexes.</text>
</comment>
<comment type="subcellular location">
    <subcellularLocation>
        <location evidence="1">Plastid</location>
        <location evidence="1">Chloroplast thylakoid membrane</location>
        <topology evidence="1">Multi-pass membrane protein</topology>
    </subcellularLocation>
</comment>
<comment type="similarity">
    <text evidence="1">Belongs to the PsbB/PsbC family. PsbC subfamily.</text>
</comment>
<feature type="propeptide" id="PRO_0000431201" evidence="1">
    <location>
        <begin position="1"/>
        <end position="2"/>
    </location>
</feature>
<feature type="chain" id="PRO_0000361483" description="Photosystem II CP43 reaction center protein" evidence="1">
    <location>
        <begin position="3"/>
        <end position="461"/>
    </location>
</feature>
<feature type="transmembrane region" description="Helical" evidence="1">
    <location>
        <begin position="57"/>
        <end position="81"/>
    </location>
</feature>
<feature type="transmembrane region" description="Helical" evidence="1">
    <location>
        <begin position="122"/>
        <end position="143"/>
    </location>
</feature>
<feature type="transmembrane region" description="Helical" evidence="1">
    <location>
        <begin position="166"/>
        <end position="188"/>
    </location>
</feature>
<feature type="transmembrane region" description="Helical" evidence="1">
    <location>
        <begin position="243"/>
        <end position="263"/>
    </location>
</feature>
<feature type="transmembrane region" description="Helical" evidence="1">
    <location>
        <begin position="279"/>
        <end position="300"/>
    </location>
</feature>
<feature type="transmembrane region" description="Helical" evidence="1">
    <location>
        <begin position="435"/>
        <end position="459"/>
    </location>
</feature>
<feature type="binding site" evidence="1">
    <location>
        <position position="355"/>
    </location>
    <ligand>
        <name>[CaMn4O5] cluster</name>
        <dbReference type="ChEBI" id="CHEBI:189552"/>
    </ligand>
</feature>
<feature type="modified residue" description="N-acetylthreonine" evidence="1">
    <location>
        <position position="3"/>
    </location>
</feature>
<feature type="modified residue" description="Phosphothreonine" evidence="1">
    <location>
        <position position="3"/>
    </location>
</feature>
<accession>Q3ZJ43</accession>
<evidence type="ECO:0000255" key="1">
    <source>
        <dbReference type="HAMAP-Rule" id="MF_01496"/>
    </source>
</evidence>
<protein>
    <recommendedName>
        <fullName evidence="1">Photosystem II CP43 reaction center protein</fullName>
    </recommendedName>
    <alternativeName>
        <fullName evidence="1">PSII 43 kDa protein</fullName>
    </alternativeName>
    <alternativeName>
        <fullName evidence="1">Protein CP-43</fullName>
    </alternativeName>
</protein>
<proteinExistence type="inferred from homology"/>
<name>PSBC_TUPAK</name>
<keyword id="KW-0007">Acetylation</keyword>
<keyword id="KW-0148">Chlorophyll</keyword>
<keyword id="KW-0150">Chloroplast</keyword>
<keyword id="KW-0157">Chromophore</keyword>
<keyword id="KW-0464">Manganese</keyword>
<keyword id="KW-0472">Membrane</keyword>
<keyword id="KW-0479">Metal-binding</keyword>
<keyword id="KW-0597">Phosphoprotein</keyword>
<keyword id="KW-0602">Photosynthesis</keyword>
<keyword id="KW-0604">Photosystem II</keyword>
<keyword id="KW-0934">Plastid</keyword>
<keyword id="KW-0793">Thylakoid</keyword>
<keyword id="KW-0812">Transmembrane</keyword>
<keyword id="KW-1133">Transmembrane helix</keyword>
<organism>
    <name type="scientific">Tupiella akineta</name>
    <name type="common">Green alga</name>
    <name type="synonym">Pseudendoclonium akinetum</name>
    <dbReference type="NCBI Taxonomy" id="160070"/>
    <lineage>
        <taxon>Eukaryota</taxon>
        <taxon>Viridiplantae</taxon>
        <taxon>Chlorophyta</taxon>
        <taxon>Ulvophyceae</taxon>
        <taxon>OUU clade</taxon>
        <taxon>Ulotrichales</taxon>
        <taxon>Tupiellaceae</taxon>
        <taxon>Tupiella</taxon>
    </lineage>
</organism>
<geneLocation type="chloroplast"/>
<gene>
    <name evidence="1" type="primary">psbC</name>
</gene>
<reference key="1">
    <citation type="journal article" date="2005" name="Mol. Biol. Evol.">
        <title>The chloroplast genome sequence of the green alga Pseudendoclonium akinetum (Ulvophyceae) reveals unusual structural features and new insights into the branching order of chlorophyte lineages.</title>
        <authorList>
            <person name="Pombert J.-F."/>
            <person name="Otis C."/>
            <person name="Lemieux C."/>
            <person name="Turmel M."/>
        </authorList>
    </citation>
    <scope>NUCLEOTIDE SEQUENCE [LARGE SCALE GENOMIC DNA]</scope>
    <source>
        <strain>UTEX 1912</strain>
    </source>
</reference>